<evidence type="ECO:0000250" key="1"/>
<evidence type="ECO:0000256" key="2">
    <source>
        <dbReference type="SAM" id="MobiDB-lite"/>
    </source>
</evidence>
<evidence type="ECO:0000305" key="3"/>
<comment type="function">
    <text>Core component of nucleosome. Nucleosomes wrap and compact DNA into chromatin, limiting DNA accessibility to the cellular machineries which require DNA as a template. Histones thereby play a central role in transcription regulation, DNA repair, DNA replication and chromosomal stability. DNA accessibility is regulated via a complex set of post-translational modifications of histones, also called histone code, and nucleosome remodeling.</text>
</comment>
<comment type="subunit">
    <text>The nucleosome is a histone octamer containing two molecules each of H2A, H2B, H3 and H4 assembled in one H3-H4 heterotetramer and two H2A-H2B heterodimers. The octamer wraps approximately 147 bp of DNA.</text>
</comment>
<comment type="subcellular location">
    <subcellularLocation>
        <location evidence="1">Nucleus</location>
    </subcellularLocation>
    <subcellularLocation>
        <location evidence="1">Chromosome</location>
    </subcellularLocation>
</comment>
<comment type="similarity">
    <text evidence="3">Belongs to the histone H3 family.</text>
</comment>
<gene>
    <name type="primary">H3-2</name>
</gene>
<name>H39_STYLE</name>
<sequence length="114" mass="12689">NTGGKAPRKHIAHKQAKKSSAAAATGGVKKPHRFRPGTVALREIRRFQKSTELLIRKLPFQRLVREIASEFKNDLRFQSSAVLALQEASEAYLVGLFEDTNLAAIHAKRVTIMP</sequence>
<organism>
    <name type="scientific">Stylonychia lemnae</name>
    <name type="common">Ciliate</name>
    <dbReference type="NCBI Taxonomy" id="5949"/>
    <lineage>
        <taxon>Eukaryota</taxon>
        <taxon>Sar</taxon>
        <taxon>Alveolata</taxon>
        <taxon>Ciliophora</taxon>
        <taxon>Intramacronucleata</taxon>
        <taxon>Spirotrichea</taxon>
        <taxon>Stichotrichia</taxon>
        <taxon>Sporadotrichida</taxon>
        <taxon>Oxytrichidae</taxon>
        <taxon>Stylonychinae</taxon>
        <taxon>Stylonychia</taxon>
    </lineage>
</organism>
<reference key="1">
    <citation type="journal article" date="1999" name="FEMS Microbiol. Lett.">
        <title>Several highly divergent histone H3 genes are present in the hypotrichous ciliate Stylonychia lemnae.</title>
        <authorList>
            <person name="Bernhard D."/>
        </authorList>
    </citation>
    <scope>NUCLEOTIDE SEQUENCE [GENOMIC DNA]</scope>
</reference>
<keyword id="KW-0158">Chromosome</keyword>
<keyword id="KW-0238">DNA-binding</keyword>
<keyword id="KW-0544">Nucleosome core</keyword>
<keyword id="KW-0539">Nucleus</keyword>
<protein>
    <recommendedName>
        <fullName>Histone H3-2</fullName>
    </recommendedName>
</protein>
<proteinExistence type="inferred from homology"/>
<dbReference type="EMBL" id="Y16635">
    <property type="protein sequence ID" value="CAA76338.1"/>
    <property type="molecule type" value="Genomic_DNA"/>
</dbReference>
<dbReference type="SMR" id="P81196"/>
<dbReference type="GO" id="GO:0000786">
    <property type="term" value="C:nucleosome"/>
    <property type="evidence" value="ECO:0007669"/>
    <property type="project" value="UniProtKB-KW"/>
</dbReference>
<dbReference type="GO" id="GO:0005634">
    <property type="term" value="C:nucleus"/>
    <property type="evidence" value="ECO:0007669"/>
    <property type="project" value="UniProtKB-SubCell"/>
</dbReference>
<dbReference type="GO" id="GO:0003677">
    <property type="term" value="F:DNA binding"/>
    <property type="evidence" value="ECO:0007669"/>
    <property type="project" value="UniProtKB-KW"/>
</dbReference>
<dbReference type="GO" id="GO:0046982">
    <property type="term" value="F:protein heterodimerization activity"/>
    <property type="evidence" value="ECO:0007669"/>
    <property type="project" value="InterPro"/>
</dbReference>
<dbReference type="GO" id="GO:0030527">
    <property type="term" value="F:structural constituent of chromatin"/>
    <property type="evidence" value="ECO:0007669"/>
    <property type="project" value="InterPro"/>
</dbReference>
<dbReference type="CDD" id="cd22911">
    <property type="entry name" value="HFD_H3"/>
    <property type="match status" value="1"/>
</dbReference>
<dbReference type="FunFam" id="1.10.20.10:FF:000001">
    <property type="entry name" value="Histone H3"/>
    <property type="match status" value="1"/>
</dbReference>
<dbReference type="Gene3D" id="1.10.20.10">
    <property type="entry name" value="Histone, subunit A"/>
    <property type="match status" value="1"/>
</dbReference>
<dbReference type="InterPro" id="IPR009072">
    <property type="entry name" value="Histone-fold"/>
</dbReference>
<dbReference type="InterPro" id="IPR007125">
    <property type="entry name" value="Histone_H2A/H2B/H3"/>
</dbReference>
<dbReference type="InterPro" id="IPR000164">
    <property type="entry name" value="Histone_H3/CENP-A"/>
</dbReference>
<dbReference type="PANTHER" id="PTHR11426">
    <property type="entry name" value="HISTONE H3"/>
    <property type="match status" value="1"/>
</dbReference>
<dbReference type="Pfam" id="PF00125">
    <property type="entry name" value="Histone"/>
    <property type="match status" value="1"/>
</dbReference>
<dbReference type="PRINTS" id="PR00622">
    <property type="entry name" value="HISTONEH3"/>
</dbReference>
<dbReference type="SMART" id="SM00428">
    <property type="entry name" value="H3"/>
    <property type="match status" value="1"/>
</dbReference>
<dbReference type="SUPFAM" id="SSF47113">
    <property type="entry name" value="Histone-fold"/>
    <property type="match status" value="1"/>
</dbReference>
<dbReference type="PROSITE" id="PS00322">
    <property type="entry name" value="HISTONE_H3_1"/>
    <property type="match status" value="1"/>
</dbReference>
<dbReference type="PROSITE" id="PS00959">
    <property type="entry name" value="HISTONE_H3_2"/>
    <property type="match status" value="1"/>
</dbReference>
<accession>P81196</accession>
<feature type="chain" id="PRO_0000221322" description="Histone H3-2">
    <location>
        <begin position="1" status="less than"/>
        <end position="114" status="greater than"/>
    </location>
</feature>
<feature type="region of interest" description="Disordered" evidence="2">
    <location>
        <begin position="1"/>
        <end position="32"/>
    </location>
</feature>
<feature type="compositionally biased region" description="Basic residues" evidence="2">
    <location>
        <begin position="1"/>
        <end position="17"/>
    </location>
</feature>
<feature type="compositionally biased region" description="Low complexity" evidence="2">
    <location>
        <begin position="18"/>
        <end position="28"/>
    </location>
</feature>
<feature type="non-terminal residue">
    <location>
        <position position="1"/>
    </location>
</feature>
<feature type="non-terminal residue">
    <location>
        <position position="114"/>
    </location>
</feature>